<organism>
    <name type="scientific">Rhodopirellula baltica (strain DSM 10527 / NCIMB 13988 / SH1)</name>
    <dbReference type="NCBI Taxonomy" id="243090"/>
    <lineage>
        <taxon>Bacteria</taxon>
        <taxon>Pseudomonadati</taxon>
        <taxon>Planctomycetota</taxon>
        <taxon>Planctomycetia</taxon>
        <taxon>Pirellulales</taxon>
        <taxon>Pirellulaceae</taxon>
        <taxon>Rhodopirellula</taxon>
    </lineage>
</organism>
<gene>
    <name evidence="1" type="primary">nadA</name>
    <name type="ordered locus">RB7425</name>
</gene>
<dbReference type="EC" id="2.5.1.72" evidence="1"/>
<dbReference type="EMBL" id="BX294146">
    <property type="protein sequence ID" value="CAD75353.1"/>
    <property type="status" value="ALT_INIT"/>
    <property type="molecule type" value="Genomic_DNA"/>
</dbReference>
<dbReference type="RefSeq" id="NP_867806.1">
    <property type="nucleotide sequence ID" value="NC_005027.1"/>
</dbReference>
<dbReference type="RefSeq" id="WP_051156418.1">
    <property type="nucleotide sequence ID" value="NC_005027.1"/>
</dbReference>
<dbReference type="SMR" id="Q7UNR5"/>
<dbReference type="FunCoup" id="Q7UNR5">
    <property type="interactions" value="421"/>
</dbReference>
<dbReference type="STRING" id="243090.RB7425"/>
<dbReference type="EnsemblBacteria" id="CAD75353">
    <property type="protein sequence ID" value="CAD75353"/>
    <property type="gene ID" value="RB7425"/>
</dbReference>
<dbReference type="KEGG" id="rba:RB7425"/>
<dbReference type="PATRIC" id="fig|243090.15.peg.3581"/>
<dbReference type="eggNOG" id="COG0379">
    <property type="taxonomic scope" value="Bacteria"/>
</dbReference>
<dbReference type="HOGENOM" id="CLU_047382_2_0_0"/>
<dbReference type="InParanoid" id="Q7UNR5"/>
<dbReference type="OrthoDB" id="9801204at2"/>
<dbReference type="UniPathway" id="UPA00253">
    <property type="reaction ID" value="UER00327"/>
</dbReference>
<dbReference type="Proteomes" id="UP000001025">
    <property type="component" value="Chromosome"/>
</dbReference>
<dbReference type="GO" id="GO:0005829">
    <property type="term" value="C:cytosol"/>
    <property type="evidence" value="ECO:0000318"/>
    <property type="project" value="GO_Central"/>
</dbReference>
<dbReference type="GO" id="GO:0051539">
    <property type="term" value="F:4 iron, 4 sulfur cluster binding"/>
    <property type="evidence" value="ECO:0000318"/>
    <property type="project" value="GO_Central"/>
</dbReference>
<dbReference type="GO" id="GO:0046872">
    <property type="term" value="F:metal ion binding"/>
    <property type="evidence" value="ECO:0007669"/>
    <property type="project" value="UniProtKB-KW"/>
</dbReference>
<dbReference type="GO" id="GO:0008987">
    <property type="term" value="F:quinolinate synthetase A activity"/>
    <property type="evidence" value="ECO:0000318"/>
    <property type="project" value="GO_Central"/>
</dbReference>
<dbReference type="GO" id="GO:0034628">
    <property type="term" value="P:'de novo' NAD biosynthetic process from L-aspartate"/>
    <property type="evidence" value="ECO:0000318"/>
    <property type="project" value="GO_Central"/>
</dbReference>
<dbReference type="FunFam" id="3.40.50.10800:FF:000001">
    <property type="entry name" value="Quinolinate synthase A"/>
    <property type="match status" value="1"/>
</dbReference>
<dbReference type="Gene3D" id="3.40.50.10800">
    <property type="entry name" value="NadA-like"/>
    <property type="match status" value="3"/>
</dbReference>
<dbReference type="HAMAP" id="MF_00569">
    <property type="entry name" value="NadA_type3"/>
    <property type="match status" value="1"/>
</dbReference>
<dbReference type="InterPro" id="IPR003473">
    <property type="entry name" value="NadA"/>
</dbReference>
<dbReference type="InterPro" id="IPR036094">
    <property type="entry name" value="NadA_sf"/>
</dbReference>
<dbReference type="InterPro" id="IPR023515">
    <property type="entry name" value="Quinolinate_synth_A_type3"/>
</dbReference>
<dbReference type="NCBIfam" id="TIGR00550">
    <property type="entry name" value="nadA"/>
    <property type="match status" value="1"/>
</dbReference>
<dbReference type="NCBIfam" id="NF006883">
    <property type="entry name" value="PRK09375.2-4"/>
    <property type="match status" value="1"/>
</dbReference>
<dbReference type="PANTHER" id="PTHR30573:SF0">
    <property type="entry name" value="QUINOLINATE SYNTHASE, CHLOROPLASTIC"/>
    <property type="match status" value="1"/>
</dbReference>
<dbReference type="PANTHER" id="PTHR30573">
    <property type="entry name" value="QUINOLINATE SYNTHETASE A"/>
    <property type="match status" value="1"/>
</dbReference>
<dbReference type="Pfam" id="PF02445">
    <property type="entry name" value="NadA"/>
    <property type="match status" value="1"/>
</dbReference>
<dbReference type="SUPFAM" id="SSF142754">
    <property type="entry name" value="NadA-like"/>
    <property type="match status" value="1"/>
</dbReference>
<proteinExistence type="inferred from homology"/>
<sequence>MVDLPTTTPPAQPTTGNDEVDALHPLKPYRSLENEVLQQRIEAVRQELGDELLILGHHYQQDEVIEHTDLRGDSYQLSEMAAKSQACRTIVFCGVHFMAETADILANRPDRIEARDGRRVDVLLPDMAAGCSMADMAAIAQVEAAWADMSEVIDTEQVIPVTYINSAASLKAFCGRHGGIVCTSSNARAVLEWAFERGQRVFFFPDQHLGRNTALTMDITEEQMPVWDPYALEMGGNTDEQIQSSRVILWKGHCSVHQMFRAEHVDRFRKEHPGIKILVHPECPREVNDIADVSGSTGKIIQTIKNSPAGTKWAIGTELHLVNRLKDEHPEQEIHFLSPVVCMCATMYRIDLTHLCWTLENLRDGRLVNQIRVDEETTKWSLIALERMLAVK</sequence>
<reference key="1">
    <citation type="journal article" date="2003" name="Proc. Natl. Acad. Sci. U.S.A.">
        <title>Complete genome sequence of the marine planctomycete Pirellula sp. strain 1.</title>
        <authorList>
            <person name="Gloeckner F.O."/>
            <person name="Kube M."/>
            <person name="Bauer M."/>
            <person name="Teeling H."/>
            <person name="Lombardot T."/>
            <person name="Ludwig W."/>
            <person name="Gade D."/>
            <person name="Beck A."/>
            <person name="Borzym K."/>
            <person name="Heitmann K."/>
            <person name="Rabus R."/>
            <person name="Schlesner H."/>
            <person name="Amann R."/>
            <person name="Reinhardt R."/>
        </authorList>
    </citation>
    <scope>NUCLEOTIDE SEQUENCE [LARGE SCALE GENOMIC DNA]</scope>
    <source>
        <strain>DSM 10527 / NCIMB 13988 / SH1</strain>
    </source>
</reference>
<name>NADA_RHOBA</name>
<evidence type="ECO:0000255" key="1">
    <source>
        <dbReference type="HAMAP-Rule" id="MF_00569"/>
    </source>
</evidence>
<evidence type="ECO:0000256" key="2">
    <source>
        <dbReference type="SAM" id="MobiDB-lite"/>
    </source>
</evidence>
<evidence type="ECO:0000305" key="3"/>
<comment type="function">
    <text evidence="1">Catalyzes the condensation of iminoaspartate with dihydroxyacetone phosphate to form quinolinate.</text>
</comment>
<comment type="catalytic activity">
    <reaction evidence="1">
        <text>iminosuccinate + dihydroxyacetone phosphate = quinolinate + phosphate + 2 H2O + H(+)</text>
        <dbReference type="Rhea" id="RHEA:25888"/>
        <dbReference type="ChEBI" id="CHEBI:15377"/>
        <dbReference type="ChEBI" id="CHEBI:15378"/>
        <dbReference type="ChEBI" id="CHEBI:29959"/>
        <dbReference type="ChEBI" id="CHEBI:43474"/>
        <dbReference type="ChEBI" id="CHEBI:57642"/>
        <dbReference type="ChEBI" id="CHEBI:77875"/>
        <dbReference type="EC" id="2.5.1.72"/>
    </reaction>
    <physiologicalReaction direction="left-to-right" evidence="1">
        <dbReference type="Rhea" id="RHEA:25889"/>
    </physiologicalReaction>
</comment>
<comment type="cofactor">
    <cofactor evidence="1">
        <name>[4Fe-4S] cluster</name>
        <dbReference type="ChEBI" id="CHEBI:49883"/>
    </cofactor>
    <text evidence="1">Binds 1 [4Fe-4S] cluster per subunit.</text>
</comment>
<comment type="pathway">
    <text evidence="1">Cofactor biosynthesis; NAD(+) biosynthesis; quinolinate from iminoaspartate: step 1/1.</text>
</comment>
<comment type="subcellular location">
    <subcellularLocation>
        <location evidence="1">Cytoplasm</location>
    </subcellularLocation>
</comment>
<comment type="similarity">
    <text evidence="1">Belongs to the quinolinate synthase family. Type 3 subfamily.</text>
</comment>
<comment type="sequence caution" evidence="3">
    <conflict type="erroneous initiation">
        <sequence resource="EMBL-CDS" id="CAD75353"/>
    </conflict>
</comment>
<feature type="chain" id="PRO_0000227025" description="Quinolinate synthase">
    <location>
        <begin position="1"/>
        <end position="392"/>
    </location>
</feature>
<feature type="region of interest" description="Disordered" evidence="2">
    <location>
        <begin position="1"/>
        <end position="23"/>
    </location>
</feature>
<feature type="binding site" evidence="1">
    <location>
        <position position="57"/>
    </location>
    <ligand>
        <name>iminosuccinate</name>
        <dbReference type="ChEBI" id="CHEBI:77875"/>
    </ligand>
</feature>
<feature type="binding site" evidence="1">
    <location>
        <position position="74"/>
    </location>
    <ligand>
        <name>iminosuccinate</name>
        <dbReference type="ChEBI" id="CHEBI:77875"/>
    </ligand>
</feature>
<feature type="binding site" evidence="1">
    <location>
        <position position="131"/>
    </location>
    <ligand>
        <name>[4Fe-4S] cluster</name>
        <dbReference type="ChEBI" id="CHEBI:49883"/>
    </ligand>
</feature>
<feature type="binding site" evidence="1">
    <location>
        <begin position="163"/>
        <end position="165"/>
    </location>
    <ligand>
        <name>iminosuccinate</name>
        <dbReference type="ChEBI" id="CHEBI:77875"/>
    </ligand>
</feature>
<feature type="binding site" evidence="1">
    <location>
        <position position="184"/>
    </location>
    <ligand>
        <name>iminosuccinate</name>
        <dbReference type="ChEBI" id="CHEBI:77875"/>
    </ligand>
</feature>
<feature type="binding site" evidence="1">
    <location>
        <position position="254"/>
    </location>
    <ligand>
        <name>[4Fe-4S] cluster</name>
        <dbReference type="ChEBI" id="CHEBI:49883"/>
    </ligand>
</feature>
<feature type="binding site" evidence="1">
    <location>
        <begin position="280"/>
        <end position="282"/>
    </location>
    <ligand>
        <name>iminosuccinate</name>
        <dbReference type="ChEBI" id="CHEBI:77875"/>
    </ligand>
</feature>
<feature type="binding site" evidence="1">
    <location>
        <position position="297"/>
    </location>
    <ligand>
        <name>iminosuccinate</name>
        <dbReference type="ChEBI" id="CHEBI:77875"/>
    </ligand>
</feature>
<feature type="binding site" evidence="1">
    <location>
        <position position="344"/>
    </location>
    <ligand>
        <name>[4Fe-4S] cluster</name>
        <dbReference type="ChEBI" id="CHEBI:49883"/>
    </ligand>
</feature>
<keyword id="KW-0004">4Fe-4S</keyword>
<keyword id="KW-0963">Cytoplasm</keyword>
<keyword id="KW-0408">Iron</keyword>
<keyword id="KW-0411">Iron-sulfur</keyword>
<keyword id="KW-0479">Metal-binding</keyword>
<keyword id="KW-0662">Pyridine nucleotide biosynthesis</keyword>
<keyword id="KW-1185">Reference proteome</keyword>
<keyword id="KW-0808">Transferase</keyword>
<protein>
    <recommendedName>
        <fullName evidence="1">Quinolinate synthase</fullName>
        <ecNumber evidence="1">2.5.1.72</ecNumber>
    </recommendedName>
</protein>
<accession>Q7UNR5</accession>